<proteinExistence type="evidence at protein level"/>
<comment type="function">
    <text evidence="1 3">Main component of the myelin sheath that plays an important role in myelin membrane biogenesis and myelination (By similarity). Plays an essential function in apical endocytosis. Regulates epithelial development through the regulation of apical endocytosis (By similarity). Part of the intracellular machinery that mediates basolateral-to-apical transport of ICAM-1, an essential adhesion receptor in epithelial cells, from the subapical compartment in hepatic epithelial cells (By similarity).</text>
</comment>
<comment type="subunit">
    <text evidence="3">Forms oligomers.</text>
</comment>
<comment type="subcellular location">
    <subcellularLocation>
        <location evidence="6">Membrane</location>
        <topology evidence="4">Multi-pass membrane protein</topology>
    </subcellularLocation>
    <subcellularLocation>
        <location evidence="3">Cell membrane</location>
        <topology evidence="4">Multi-pass membrane protein</topology>
    </subcellularLocation>
    <subcellularLocation>
        <location evidence="2">Myelin membrane</location>
        <topology evidence="4">Multi-pass membrane protein</topology>
    </subcellularLocation>
    <subcellularLocation>
        <location evidence="2">Apical cell membrane</location>
        <topology evidence="4">Multi-pass membrane protein</topology>
    </subcellularLocation>
    <text evidence="1 2 7">In polarized cells, localized predominantly in the apical membrane (By similarity). Located in lipid raft (By similarity). Recycled between the plasma membrane and the Golgi complex (PubMed:26002055). PLLP is continuously recirculating in the cell (PubMed:26002055).</text>
</comment>
<comment type="PTM">
    <text evidence="2">Phosphorylated.</text>
</comment>
<comment type="similarity">
    <text evidence="8">Belongs to the MAL family.</text>
</comment>
<evidence type="ECO:0000250" key="1">
    <source>
        <dbReference type="UniProtKB" id="A3KQ86"/>
    </source>
</evidence>
<evidence type="ECO:0000250" key="2">
    <source>
        <dbReference type="UniProtKB" id="P47987"/>
    </source>
</evidence>
<evidence type="ECO:0000250" key="3">
    <source>
        <dbReference type="UniProtKB" id="Q9Y342"/>
    </source>
</evidence>
<evidence type="ECO:0000255" key="4"/>
<evidence type="ECO:0000255" key="5">
    <source>
        <dbReference type="PROSITE-ProRule" id="PRU00581"/>
    </source>
</evidence>
<evidence type="ECO:0000269" key="6">
    <source>
    </source>
</evidence>
<evidence type="ECO:0000269" key="7">
    <source>
    </source>
</evidence>
<evidence type="ECO:0000305" key="8"/>
<protein>
    <recommendedName>
        <fullName>Plasmolipin</fullName>
    </recommendedName>
    <alternativeName>
        <fullName>Plasma membrane proteolipid</fullName>
    </alternativeName>
</protein>
<sequence>MAEFPSKVSTRTSSPAQGVGASVSALRPDLGFVRSALGVLALLQLALGLLVWALIADTPYHLYPAYGWVMFVAVFLWLVTIVFFIIYLFQLHMKLYMVPWPLVLLIFFVAATVLYITAFIACAAAVDLTSLRGSRPYNQRSAASFFACLVMIAYGVSAFFSFQAWRGVGSNAATSQMAGGYS</sequence>
<keyword id="KW-1003">Cell membrane</keyword>
<keyword id="KW-0472">Membrane</keyword>
<keyword id="KW-0597">Phosphoprotein</keyword>
<keyword id="KW-1185">Reference proteome</keyword>
<keyword id="KW-0812">Transmembrane</keyword>
<keyword id="KW-1133">Transmembrane helix</keyword>
<accession>Q9DCU2</accession>
<accession>Q544Q5</accession>
<feature type="chain" id="PRO_0000156814" description="Plasmolipin">
    <location>
        <begin position="1"/>
        <end position="182"/>
    </location>
</feature>
<feature type="topological domain" description="Cytoplasmic" evidence="4">
    <location>
        <begin position="1"/>
        <end position="35"/>
    </location>
</feature>
<feature type="transmembrane region" description="Helical" evidence="4">
    <location>
        <begin position="36"/>
        <end position="56"/>
    </location>
</feature>
<feature type="topological domain" description="Extracellular" evidence="4">
    <location>
        <begin position="57"/>
        <end position="68"/>
    </location>
</feature>
<feature type="transmembrane region" description="Helical" evidence="4">
    <location>
        <begin position="69"/>
        <end position="89"/>
    </location>
</feature>
<feature type="topological domain" description="Cytoplasmic" evidence="4">
    <location>
        <begin position="90"/>
        <end position="99"/>
    </location>
</feature>
<feature type="transmembrane region" description="Helical" evidence="4">
    <location>
        <begin position="100"/>
        <end position="120"/>
    </location>
</feature>
<feature type="topological domain" description="Extracellular" evidence="4">
    <location>
        <begin position="121"/>
        <end position="141"/>
    </location>
</feature>
<feature type="transmembrane region" description="Helical" evidence="4">
    <location>
        <begin position="142"/>
        <end position="162"/>
    </location>
</feature>
<feature type="topological domain" description="Cytoplasmic" evidence="4">
    <location>
        <begin position="163"/>
        <end position="182"/>
    </location>
</feature>
<feature type="domain" description="MARVEL" evidence="5">
    <location>
        <begin position="32"/>
        <end position="166"/>
    </location>
</feature>
<feature type="modified residue" description="Phosphoserine" evidence="3">
    <location>
        <position position="9"/>
    </location>
</feature>
<gene>
    <name type="primary">Pllp</name>
    <name type="synonym">Plapi</name>
    <name type="synonym">Pmlp</name>
    <name type="synonym">Tm4sf11</name>
</gene>
<dbReference type="EMBL" id="AJ298129">
    <property type="protein sequence ID" value="CAC88126.1"/>
    <property type="molecule type" value="Genomic_DNA"/>
</dbReference>
<dbReference type="EMBL" id="AJ298130">
    <property type="protein sequence ID" value="CAC88126.1"/>
    <property type="status" value="JOINED"/>
    <property type="molecule type" value="Genomic_DNA"/>
</dbReference>
<dbReference type="EMBL" id="AK002477">
    <property type="protein sequence ID" value="BAB22130.1"/>
    <property type="molecule type" value="mRNA"/>
</dbReference>
<dbReference type="EMBL" id="AK032540">
    <property type="protein sequence ID" value="BAC27916.1"/>
    <property type="molecule type" value="mRNA"/>
</dbReference>
<dbReference type="EMBL" id="BC024534">
    <property type="protein sequence ID" value="AAH24534.1"/>
    <property type="molecule type" value="mRNA"/>
</dbReference>
<dbReference type="CCDS" id="CCDS22546.1"/>
<dbReference type="RefSeq" id="NP_080661.1">
    <property type="nucleotide sequence ID" value="NM_026385.4"/>
</dbReference>
<dbReference type="SMR" id="Q9DCU2"/>
<dbReference type="BioGRID" id="212450">
    <property type="interactions" value="1"/>
</dbReference>
<dbReference type="FunCoup" id="Q9DCU2">
    <property type="interactions" value="38"/>
</dbReference>
<dbReference type="STRING" id="10090.ENSMUSP00000034227"/>
<dbReference type="iPTMnet" id="Q9DCU2"/>
<dbReference type="PhosphoSitePlus" id="Q9DCU2"/>
<dbReference type="jPOST" id="Q9DCU2"/>
<dbReference type="PaxDb" id="10090-ENSMUSP00000034227"/>
<dbReference type="PeptideAtlas" id="Q9DCU2"/>
<dbReference type="ProteomicsDB" id="289446"/>
<dbReference type="Antibodypedia" id="44063">
    <property type="antibodies" value="105 antibodies from 22 providers"/>
</dbReference>
<dbReference type="DNASU" id="67801"/>
<dbReference type="Ensembl" id="ENSMUST00000034227.6">
    <property type="protein sequence ID" value="ENSMUSP00000034227.5"/>
    <property type="gene ID" value="ENSMUSG00000031775.6"/>
</dbReference>
<dbReference type="GeneID" id="67801"/>
<dbReference type="KEGG" id="mmu:67801"/>
<dbReference type="UCSC" id="uc009mwv.1">
    <property type="organism name" value="mouse"/>
</dbReference>
<dbReference type="AGR" id="MGI:1915051"/>
<dbReference type="CTD" id="51090"/>
<dbReference type="MGI" id="MGI:1915051">
    <property type="gene designation" value="Pllp"/>
</dbReference>
<dbReference type="VEuPathDB" id="HostDB:ENSMUSG00000031775"/>
<dbReference type="eggNOG" id="KOG4788">
    <property type="taxonomic scope" value="Eukaryota"/>
</dbReference>
<dbReference type="GeneTree" id="ENSGT00940000156011"/>
<dbReference type="HOGENOM" id="CLU_103581_2_0_1"/>
<dbReference type="InParanoid" id="Q9DCU2"/>
<dbReference type="OMA" id="MYATAFI"/>
<dbReference type="OrthoDB" id="6258237at2759"/>
<dbReference type="PhylomeDB" id="Q9DCU2"/>
<dbReference type="TreeFam" id="TF316174"/>
<dbReference type="BioGRID-ORCS" id="67801">
    <property type="hits" value="1 hit in 79 CRISPR screens"/>
</dbReference>
<dbReference type="CD-CODE" id="CE726F99">
    <property type="entry name" value="Postsynaptic density"/>
</dbReference>
<dbReference type="PRO" id="PR:Q9DCU2"/>
<dbReference type="Proteomes" id="UP000000589">
    <property type="component" value="Chromosome 8"/>
</dbReference>
<dbReference type="RNAct" id="Q9DCU2">
    <property type="molecule type" value="protein"/>
</dbReference>
<dbReference type="Bgee" id="ENSMUSG00000031775">
    <property type="expression patterns" value="Expressed in epithelium of stomach and 147 other cell types or tissues"/>
</dbReference>
<dbReference type="ExpressionAtlas" id="Q9DCU2">
    <property type="expression patterns" value="baseline and differential"/>
</dbReference>
<dbReference type="GO" id="GO:0016324">
    <property type="term" value="C:apical plasma membrane"/>
    <property type="evidence" value="ECO:0007669"/>
    <property type="project" value="UniProtKB-SubCell"/>
</dbReference>
<dbReference type="GO" id="GO:0043209">
    <property type="term" value="C:myelin sheath"/>
    <property type="evidence" value="ECO:0007669"/>
    <property type="project" value="UniProtKB-SubCell"/>
</dbReference>
<dbReference type="GO" id="GO:0042802">
    <property type="term" value="F:identical protein binding"/>
    <property type="evidence" value="ECO:0007669"/>
    <property type="project" value="Ensembl"/>
</dbReference>
<dbReference type="GO" id="GO:0032288">
    <property type="term" value="P:myelin assembly"/>
    <property type="evidence" value="ECO:0007669"/>
    <property type="project" value="Ensembl"/>
</dbReference>
<dbReference type="GO" id="GO:0030100">
    <property type="term" value="P:regulation of endocytosis"/>
    <property type="evidence" value="ECO:0000250"/>
    <property type="project" value="UniProtKB"/>
</dbReference>
<dbReference type="GO" id="GO:1904298">
    <property type="term" value="P:regulation of transcytosis"/>
    <property type="evidence" value="ECO:0007669"/>
    <property type="project" value="Ensembl"/>
</dbReference>
<dbReference type="InterPro" id="IPR013295">
    <property type="entry name" value="MAL"/>
</dbReference>
<dbReference type="InterPro" id="IPR008253">
    <property type="entry name" value="Marvel"/>
</dbReference>
<dbReference type="InterPro" id="IPR050578">
    <property type="entry name" value="MARVEL-CKLF_proteins"/>
</dbReference>
<dbReference type="PANTHER" id="PTHR22776">
    <property type="entry name" value="MARVEL-CONTAINING POTENTIAL LIPID RAFT-ASSOCIATED PROTEIN"/>
    <property type="match status" value="1"/>
</dbReference>
<dbReference type="PANTHER" id="PTHR22776:SF9">
    <property type="entry name" value="PLASMOLIPIN"/>
    <property type="match status" value="1"/>
</dbReference>
<dbReference type="Pfam" id="PF01284">
    <property type="entry name" value="MARVEL"/>
    <property type="match status" value="1"/>
</dbReference>
<dbReference type="PRINTS" id="PR01884">
    <property type="entry name" value="MALPROTEIN"/>
</dbReference>
<dbReference type="PROSITE" id="PS51225">
    <property type="entry name" value="MARVEL"/>
    <property type="match status" value="1"/>
</dbReference>
<organism>
    <name type="scientific">Mus musculus</name>
    <name type="common">Mouse</name>
    <dbReference type="NCBI Taxonomy" id="10090"/>
    <lineage>
        <taxon>Eukaryota</taxon>
        <taxon>Metazoa</taxon>
        <taxon>Chordata</taxon>
        <taxon>Craniata</taxon>
        <taxon>Vertebrata</taxon>
        <taxon>Euteleostomi</taxon>
        <taxon>Mammalia</taxon>
        <taxon>Eutheria</taxon>
        <taxon>Euarchontoglires</taxon>
        <taxon>Glires</taxon>
        <taxon>Rodentia</taxon>
        <taxon>Myomorpha</taxon>
        <taxon>Muroidea</taxon>
        <taxon>Muridae</taxon>
        <taxon>Murinae</taxon>
        <taxon>Mus</taxon>
        <taxon>Mus</taxon>
    </lineage>
</organism>
<reference key="1">
    <citation type="journal article" date="2001" name="Mamm. Genome">
        <title>Plasmolipin: genomic structure, chromosomal localization, protein expression pattern and putative association with Bardet-Biedl syndrome.</title>
        <authorList>
            <person name="Hamacher M."/>
            <person name="Pippirs U."/>
            <person name="Koehler A."/>
            <person name="Mueller H.W."/>
            <person name="Bosse F."/>
        </authorList>
    </citation>
    <scope>NUCLEOTIDE SEQUENCE [GENOMIC DNA]</scope>
    <scope>SUBCELLULAR LOCATION</scope>
    <source>
        <strain>129/SvEvTacfBr</strain>
        <tissue>Spleen</tissue>
    </source>
</reference>
<reference key="2">
    <citation type="journal article" date="2005" name="Science">
        <title>The transcriptional landscape of the mammalian genome.</title>
        <authorList>
            <person name="Carninci P."/>
            <person name="Kasukawa T."/>
            <person name="Katayama S."/>
            <person name="Gough J."/>
            <person name="Frith M.C."/>
            <person name="Maeda N."/>
            <person name="Oyama R."/>
            <person name="Ravasi T."/>
            <person name="Lenhard B."/>
            <person name="Wells C."/>
            <person name="Kodzius R."/>
            <person name="Shimokawa K."/>
            <person name="Bajic V.B."/>
            <person name="Brenner S.E."/>
            <person name="Batalov S."/>
            <person name="Forrest A.R."/>
            <person name="Zavolan M."/>
            <person name="Davis M.J."/>
            <person name="Wilming L.G."/>
            <person name="Aidinis V."/>
            <person name="Allen J.E."/>
            <person name="Ambesi-Impiombato A."/>
            <person name="Apweiler R."/>
            <person name="Aturaliya R.N."/>
            <person name="Bailey T.L."/>
            <person name="Bansal M."/>
            <person name="Baxter L."/>
            <person name="Beisel K.W."/>
            <person name="Bersano T."/>
            <person name="Bono H."/>
            <person name="Chalk A.M."/>
            <person name="Chiu K.P."/>
            <person name="Choudhary V."/>
            <person name="Christoffels A."/>
            <person name="Clutterbuck D.R."/>
            <person name="Crowe M.L."/>
            <person name="Dalla E."/>
            <person name="Dalrymple B.P."/>
            <person name="de Bono B."/>
            <person name="Della Gatta G."/>
            <person name="di Bernardo D."/>
            <person name="Down T."/>
            <person name="Engstrom P."/>
            <person name="Fagiolini M."/>
            <person name="Faulkner G."/>
            <person name="Fletcher C.F."/>
            <person name="Fukushima T."/>
            <person name="Furuno M."/>
            <person name="Futaki S."/>
            <person name="Gariboldi M."/>
            <person name="Georgii-Hemming P."/>
            <person name="Gingeras T.R."/>
            <person name="Gojobori T."/>
            <person name="Green R.E."/>
            <person name="Gustincich S."/>
            <person name="Harbers M."/>
            <person name="Hayashi Y."/>
            <person name="Hensch T.K."/>
            <person name="Hirokawa N."/>
            <person name="Hill D."/>
            <person name="Huminiecki L."/>
            <person name="Iacono M."/>
            <person name="Ikeo K."/>
            <person name="Iwama A."/>
            <person name="Ishikawa T."/>
            <person name="Jakt M."/>
            <person name="Kanapin A."/>
            <person name="Katoh M."/>
            <person name="Kawasawa Y."/>
            <person name="Kelso J."/>
            <person name="Kitamura H."/>
            <person name="Kitano H."/>
            <person name="Kollias G."/>
            <person name="Krishnan S.P."/>
            <person name="Kruger A."/>
            <person name="Kummerfeld S.K."/>
            <person name="Kurochkin I.V."/>
            <person name="Lareau L.F."/>
            <person name="Lazarevic D."/>
            <person name="Lipovich L."/>
            <person name="Liu J."/>
            <person name="Liuni S."/>
            <person name="McWilliam S."/>
            <person name="Madan Babu M."/>
            <person name="Madera M."/>
            <person name="Marchionni L."/>
            <person name="Matsuda H."/>
            <person name="Matsuzawa S."/>
            <person name="Miki H."/>
            <person name="Mignone F."/>
            <person name="Miyake S."/>
            <person name="Morris K."/>
            <person name="Mottagui-Tabar S."/>
            <person name="Mulder N."/>
            <person name="Nakano N."/>
            <person name="Nakauchi H."/>
            <person name="Ng P."/>
            <person name="Nilsson R."/>
            <person name="Nishiguchi S."/>
            <person name="Nishikawa S."/>
            <person name="Nori F."/>
            <person name="Ohara O."/>
            <person name="Okazaki Y."/>
            <person name="Orlando V."/>
            <person name="Pang K.C."/>
            <person name="Pavan W.J."/>
            <person name="Pavesi G."/>
            <person name="Pesole G."/>
            <person name="Petrovsky N."/>
            <person name="Piazza S."/>
            <person name="Reed J."/>
            <person name="Reid J.F."/>
            <person name="Ring B.Z."/>
            <person name="Ringwald M."/>
            <person name="Rost B."/>
            <person name="Ruan Y."/>
            <person name="Salzberg S.L."/>
            <person name="Sandelin A."/>
            <person name="Schneider C."/>
            <person name="Schoenbach C."/>
            <person name="Sekiguchi K."/>
            <person name="Semple C.A."/>
            <person name="Seno S."/>
            <person name="Sessa L."/>
            <person name="Sheng Y."/>
            <person name="Shibata Y."/>
            <person name="Shimada H."/>
            <person name="Shimada K."/>
            <person name="Silva D."/>
            <person name="Sinclair B."/>
            <person name="Sperling S."/>
            <person name="Stupka E."/>
            <person name="Sugiura K."/>
            <person name="Sultana R."/>
            <person name="Takenaka Y."/>
            <person name="Taki K."/>
            <person name="Tammoja K."/>
            <person name="Tan S.L."/>
            <person name="Tang S."/>
            <person name="Taylor M.S."/>
            <person name="Tegner J."/>
            <person name="Teichmann S.A."/>
            <person name="Ueda H.R."/>
            <person name="van Nimwegen E."/>
            <person name="Verardo R."/>
            <person name="Wei C.L."/>
            <person name="Yagi K."/>
            <person name="Yamanishi H."/>
            <person name="Zabarovsky E."/>
            <person name="Zhu S."/>
            <person name="Zimmer A."/>
            <person name="Hide W."/>
            <person name="Bult C."/>
            <person name="Grimmond S.M."/>
            <person name="Teasdale R.D."/>
            <person name="Liu E.T."/>
            <person name="Brusic V."/>
            <person name="Quackenbush J."/>
            <person name="Wahlestedt C."/>
            <person name="Mattick J.S."/>
            <person name="Hume D.A."/>
            <person name="Kai C."/>
            <person name="Sasaki D."/>
            <person name="Tomaru Y."/>
            <person name="Fukuda S."/>
            <person name="Kanamori-Katayama M."/>
            <person name="Suzuki M."/>
            <person name="Aoki J."/>
            <person name="Arakawa T."/>
            <person name="Iida J."/>
            <person name="Imamura K."/>
            <person name="Itoh M."/>
            <person name="Kato T."/>
            <person name="Kawaji H."/>
            <person name="Kawagashira N."/>
            <person name="Kawashima T."/>
            <person name="Kojima M."/>
            <person name="Kondo S."/>
            <person name="Konno H."/>
            <person name="Nakano K."/>
            <person name="Ninomiya N."/>
            <person name="Nishio T."/>
            <person name="Okada M."/>
            <person name="Plessy C."/>
            <person name="Shibata K."/>
            <person name="Shiraki T."/>
            <person name="Suzuki S."/>
            <person name="Tagami M."/>
            <person name="Waki K."/>
            <person name="Watahiki A."/>
            <person name="Okamura-Oho Y."/>
            <person name="Suzuki H."/>
            <person name="Kawai J."/>
            <person name="Hayashizaki Y."/>
        </authorList>
    </citation>
    <scope>NUCLEOTIDE SEQUENCE [LARGE SCALE MRNA]</scope>
    <source>
        <strain>C57BL/6J</strain>
        <tissue>Kidney</tissue>
        <tissue>Olfactory bulb</tissue>
    </source>
</reference>
<reference key="3">
    <citation type="journal article" date="2004" name="Genome Res.">
        <title>The status, quality, and expansion of the NIH full-length cDNA project: the Mammalian Gene Collection (MGC).</title>
        <authorList>
            <consortium name="The MGC Project Team"/>
        </authorList>
    </citation>
    <scope>NUCLEOTIDE SEQUENCE [LARGE SCALE MRNA]</scope>
    <source>
        <tissue>Colon</tissue>
    </source>
</reference>
<reference key="4">
    <citation type="journal article" date="2010" name="Cell">
        <title>A tissue-specific atlas of mouse protein phosphorylation and expression.</title>
        <authorList>
            <person name="Huttlin E.L."/>
            <person name="Jedrychowski M.P."/>
            <person name="Elias J.E."/>
            <person name="Goswami T."/>
            <person name="Rad R."/>
            <person name="Beausoleil S.A."/>
            <person name="Villen J."/>
            <person name="Haas W."/>
            <person name="Sowa M.E."/>
            <person name="Gygi S.P."/>
        </authorList>
    </citation>
    <scope>IDENTIFICATION BY MASS SPECTROMETRY [LARGE SCALE ANALYSIS]</scope>
    <source>
        <tissue>Brain</tissue>
        <tissue>Kidney</tissue>
        <tissue>Lung</tissue>
    </source>
</reference>
<reference key="5">
    <citation type="journal article" date="2015" name="J. Cell Sci.">
        <title>The myelin proteolipid plasmolipin forms oligomers and induces liquid-ordered membranes in the Golgi complex.</title>
        <authorList>
            <person name="Yaffe Y."/>
            <person name="Hugger I."/>
            <person name="Yassaf I.N."/>
            <person name="Shepshelovitch J."/>
            <person name="Sklan E.H."/>
            <person name="Elkabetz Y."/>
            <person name="Yeheskel A."/>
            <person name="Pasmanik-Chor M."/>
            <person name="Benzing C."/>
            <person name="Macmillan A."/>
            <person name="Gaus K."/>
            <person name="Eshed-Eisenbach Y."/>
            <person name="Peles E."/>
            <person name="Hirschberg K."/>
        </authorList>
    </citation>
    <scope>SUBCELLULAR LOCATION</scope>
</reference>
<name>PLLP_MOUSE</name>